<reference key="1">
    <citation type="journal article" date="2002" name="Environ. Microbiol.">
        <title>Complete genome sequence and comparative analysis of the metabolically versatile Pseudomonas putida KT2440.</title>
        <authorList>
            <person name="Nelson K.E."/>
            <person name="Weinel C."/>
            <person name="Paulsen I.T."/>
            <person name="Dodson R.J."/>
            <person name="Hilbert H."/>
            <person name="Martins dos Santos V.A.P."/>
            <person name="Fouts D.E."/>
            <person name="Gill S.R."/>
            <person name="Pop M."/>
            <person name="Holmes M."/>
            <person name="Brinkac L.M."/>
            <person name="Beanan M.J."/>
            <person name="DeBoy R.T."/>
            <person name="Daugherty S.C."/>
            <person name="Kolonay J.F."/>
            <person name="Madupu R."/>
            <person name="Nelson W.C."/>
            <person name="White O."/>
            <person name="Peterson J.D."/>
            <person name="Khouri H.M."/>
            <person name="Hance I."/>
            <person name="Chris Lee P."/>
            <person name="Holtzapple E.K."/>
            <person name="Scanlan D."/>
            <person name="Tran K."/>
            <person name="Moazzez A."/>
            <person name="Utterback T.R."/>
            <person name="Rizzo M."/>
            <person name="Lee K."/>
            <person name="Kosack D."/>
            <person name="Moestl D."/>
            <person name="Wedler H."/>
            <person name="Lauber J."/>
            <person name="Stjepandic D."/>
            <person name="Hoheisel J."/>
            <person name="Straetz M."/>
            <person name="Heim S."/>
            <person name="Kiewitz C."/>
            <person name="Eisen J.A."/>
            <person name="Timmis K.N."/>
            <person name="Duesterhoeft A."/>
            <person name="Tuemmler B."/>
            <person name="Fraser C.M."/>
        </authorList>
    </citation>
    <scope>NUCLEOTIDE SEQUENCE [LARGE SCALE GENOMIC DNA]</scope>
    <source>
        <strain>ATCC 47054 / DSM 6125 / CFBP 8728 / NCIMB 11950 / KT2440</strain>
    </source>
</reference>
<accession>Q88QJ9</accession>
<keyword id="KW-0963">Cytoplasm</keyword>
<keyword id="KW-1185">Reference proteome</keyword>
<feature type="chain" id="PRO_0000189646" description="Protein FdhE homolog">
    <location>
        <begin position="1"/>
        <end position="318"/>
    </location>
</feature>
<name>FDHE_PSEPK</name>
<sequence>MITDEKKDERLSIILEPGQIEASAVTPPFLHLPAANLFELRAARLEQLAEGNALGDYLRLIARLCRIQQQLVDNPPGGMPVAEARQRLCMDHGLPPLAADSLVREGPWLVWLQALLEHLSGETRGPMGEALQVLRGSDDNQRKGWGIALLAGQYDGVPAALVPFLGAALQAAWSSWLLALPAHQLKPAGSLAQCPACGSPAMAGVVRNRGKHNGLRYLACSLCACEWHVVRVKCVYCESSKDLRYTSLEDDRHAPGKAPLRAECCPGCDSYLKQNYLENDAAAEPLADDLASLALDIRLDGEGFHRLAPNLMLAPGGG</sequence>
<protein>
    <recommendedName>
        <fullName evidence="1">Protein FdhE homolog</fullName>
    </recommendedName>
</protein>
<proteinExistence type="inferred from homology"/>
<gene>
    <name evidence="1" type="primary">fdhE</name>
    <name type="ordered locus">PP_0492</name>
</gene>
<organism>
    <name type="scientific">Pseudomonas putida (strain ATCC 47054 / DSM 6125 / CFBP 8728 / NCIMB 11950 / KT2440)</name>
    <dbReference type="NCBI Taxonomy" id="160488"/>
    <lineage>
        <taxon>Bacteria</taxon>
        <taxon>Pseudomonadati</taxon>
        <taxon>Pseudomonadota</taxon>
        <taxon>Gammaproteobacteria</taxon>
        <taxon>Pseudomonadales</taxon>
        <taxon>Pseudomonadaceae</taxon>
        <taxon>Pseudomonas</taxon>
    </lineage>
</organism>
<evidence type="ECO:0000255" key="1">
    <source>
        <dbReference type="HAMAP-Rule" id="MF_00611"/>
    </source>
</evidence>
<comment type="function">
    <text evidence="1">Necessary for formate dehydrogenase activity.</text>
</comment>
<comment type="subcellular location">
    <subcellularLocation>
        <location evidence="1">Cytoplasm</location>
    </subcellularLocation>
</comment>
<comment type="similarity">
    <text evidence="1">Belongs to the FdhE family.</text>
</comment>
<dbReference type="EMBL" id="AE015451">
    <property type="protein sequence ID" value="AAN66121.1"/>
    <property type="molecule type" value="Genomic_DNA"/>
</dbReference>
<dbReference type="RefSeq" id="NP_742657.1">
    <property type="nucleotide sequence ID" value="NC_002947.4"/>
</dbReference>
<dbReference type="SMR" id="Q88QJ9"/>
<dbReference type="STRING" id="160488.PP_0492"/>
<dbReference type="PaxDb" id="160488-PP_0492"/>
<dbReference type="KEGG" id="ppu:PP_0492"/>
<dbReference type="eggNOG" id="COG3058">
    <property type="taxonomic scope" value="Bacteria"/>
</dbReference>
<dbReference type="HOGENOM" id="CLU_055275_0_0_6"/>
<dbReference type="OrthoDB" id="9794151at2"/>
<dbReference type="PhylomeDB" id="Q88QJ9"/>
<dbReference type="BioCyc" id="PPUT160488:G1G01-540-MONOMER"/>
<dbReference type="Proteomes" id="UP000000556">
    <property type="component" value="Chromosome"/>
</dbReference>
<dbReference type="GO" id="GO:0005829">
    <property type="term" value="C:cytosol"/>
    <property type="evidence" value="ECO:0007669"/>
    <property type="project" value="TreeGrafter"/>
</dbReference>
<dbReference type="GO" id="GO:0008199">
    <property type="term" value="F:ferric iron binding"/>
    <property type="evidence" value="ECO:0007669"/>
    <property type="project" value="TreeGrafter"/>
</dbReference>
<dbReference type="GO" id="GO:0051604">
    <property type="term" value="P:protein maturation"/>
    <property type="evidence" value="ECO:0007669"/>
    <property type="project" value="TreeGrafter"/>
</dbReference>
<dbReference type="CDD" id="cd16341">
    <property type="entry name" value="FdhE"/>
    <property type="match status" value="1"/>
</dbReference>
<dbReference type="Gene3D" id="3.90.1670.10">
    <property type="entry name" value="FdhE-like domain"/>
    <property type="match status" value="1"/>
</dbReference>
<dbReference type="HAMAP" id="MF_00611">
    <property type="entry name" value="FdeH"/>
    <property type="match status" value="1"/>
</dbReference>
<dbReference type="InterPro" id="IPR024064">
    <property type="entry name" value="FdhE-like_sf"/>
</dbReference>
<dbReference type="InterPro" id="IPR056796">
    <property type="entry name" value="FdhE_C"/>
</dbReference>
<dbReference type="InterPro" id="IPR056797">
    <property type="entry name" value="FdhE_central"/>
</dbReference>
<dbReference type="InterPro" id="IPR056774">
    <property type="entry name" value="FdhE_N"/>
</dbReference>
<dbReference type="InterPro" id="IPR006452">
    <property type="entry name" value="Formate_DH_accessory"/>
</dbReference>
<dbReference type="NCBIfam" id="TIGR01562">
    <property type="entry name" value="FdhE"/>
    <property type="match status" value="1"/>
</dbReference>
<dbReference type="PANTHER" id="PTHR37689">
    <property type="entry name" value="PROTEIN FDHE"/>
    <property type="match status" value="1"/>
</dbReference>
<dbReference type="PANTHER" id="PTHR37689:SF1">
    <property type="entry name" value="PROTEIN FDHE"/>
    <property type="match status" value="1"/>
</dbReference>
<dbReference type="Pfam" id="PF24860">
    <property type="entry name" value="FdhE_C"/>
    <property type="match status" value="1"/>
</dbReference>
<dbReference type="Pfam" id="PF24859">
    <property type="entry name" value="FdhE_central"/>
    <property type="match status" value="1"/>
</dbReference>
<dbReference type="Pfam" id="PF04216">
    <property type="entry name" value="FdhE_N"/>
    <property type="match status" value="1"/>
</dbReference>
<dbReference type="PIRSF" id="PIRSF018296">
    <property type="entry name" value="Format_dh_formtn"/>
    <property type="match status" value="1"/>
</dbReference>
<dbReference type="SUPFAM" id="SSF144020">
    <property type="entry name" value="FdhE-like"/>
    <property type="match status" value="1"/>
</dbReference>